<comment type="function">
    <text evidence="1">Catalyzes the conversion of GTP to 2,5-diamino-6-ribosylamino-4(3H)-pyrimidinone 5'-phosphate (DARP), formate and pyrophosphate.</text>
</comment>
<comment type="catalytic activity">
    <reaction evidence="1">
        <text>GTP + 4 H2O = 2,5-diamino-6-hydroxy-4-(5-phosphoribosylamino)-pyrimidine + formate + 2 phosphate + 3 H(+)</text>
        <dbReference type="Rhea" id="RHEA:23704"/>
        <dbReference type="ChEBI" id="CHEBI:15377"/>
        <dbReference type="ChEBI" id="CHEBI:15378"/>
        <dbReference type="ChEBI" id="CHEBI:15740"/>
        <dbReference type="ChEBI" id="CHEBI:37565"/>
        <dbReference type="ChEBI" id="CHEBI:43474"/>
        <dbReference type="ChEBI" id="CHEBI:58614"/>
        <dbReference type="EC" id="3.5.4.25"/>
    </reaction>
</comment>
<comment type="cofactor">
    <cofactor evidence="1">
        <name>Zn(2+)</name>
        <dbReference type="ChEBI" id="CHEBI:29105"/>
    </cofactor>
    <text evidence="1">Binds 1 zinc ion per subunit.</text>
</comment>
<comment type="pathway">
    <text evidence="1">Cofactor biosynthesis; riboflavin biosynthesis; 5-amino-6-(D-ribitylamino)uracil from GTP: step 1/4.</text>
</comment>
<comment type="subunit">
    <text evidence="1">Homodimer.</text>
</comment>
<comment type="similarity">
    <text evidence="1">Belongs to the GTP cyclohydrolase II family.</text>
</comment>
<name>RIBA_ECOSM</name>
<evidence type="ECO:0000255" key="1">
    <source>
        <dbReference type="HAMAP-Rule" id="MF_00179"/>
    </source>
</evidence>
<gene>
    <name evidence="1" type="primary">ribA</name>
    <name type="ordered locus">EcSMS35_1852</name>
</gene>
<feature type="chain" id="PRO_1000118430" description="GTP cyclohydrolase-2">
    <location>
        <begin position="1"/>
        <end position="196"/>
    </location>
</feature>
<feature type="active site" description="Proton acceptor" evidence="1">
    <location>
        <position position="126"/>
    </location>
</feature>
<feature type="active site" description="Nucleophile" evidence="1">
    <location>
        <position position="128"/>
    </location>
</feature>
<feature type="binding site" evidence="1">
    <location>
        <begin position="49"/>
        <end position="53"/>
    </location>
    <ligand>
        <name>GTP</name>
        <dbReference type="ChEBI" id="CHEBI:37565"/>
    </ligand>
</feature>
<feature type="binding site" evidence="1">
    <location>
        <position position="54"/>
    </location>
    <ligand>
        <name>Zn(2+)</name>
        <dbReference type="ChEBI" id="CHEBI:29105"/>
        <note>catalytic</note>
    </ligand>
</feature>
<feature type="binding site" evidence="1">
    <location>
        <position position="65"/>
    </location>
    <ligand>
        <name>Zn(2+)</name>
        <dbReference type="ChEBI" id="CHEBI:29105"/>
        <note>catalytic</note>
    </ligand>
</feature>
<feature type="binding site" evidence="1">
    <location>
        <position position="67"/>
    </location>
    <ligand>
        <name>Zn(2+)</name>
        <dbReference type="ChEBI" id="CHEBI:29105"/>
        <note>catalytic</note>
    </ligand>
</feature>
<feature type="binding site" evidence="1">
    <location>
        <position position="70"/>
    </location>
    <ligand>
        <name>GTP</name>
        <dbReference type="ChEBI" id="CHEBI:37565"/>
    </ligand>
</feature>
<feature type="binding site" evidence="1">
    <location>
        <begin position="92"/>
        <end position="94"/>
    </location>
    <ligand>
        <name>GTP</name>
        <dbReference type="ChEBI" id="CHEBI:37565"/>
    </ligand>
</feature>
<feature type="binding site" evidence="1">
    <location>
        <position position="114"/>
    </location>
    <ligand>
        <name>GTP</name>
        <dbReference type="ChEBI" id="CHEBI:37565"/>
    </ligand>
</feature>
<feature type="binding site" evidence="1">
    <location>
        <position position="149"/>
    </location>
    <ligand>
        <name>GTP</name>
        <dbReference type="ChEBI" id="CHEBI:37565"/>
    </ligand>
</feature>
<feature type="binding site" evidence="1">
    <location>
        <position position="154"/>
    </location>
    <ligand>
        <name>GTP</name>
        <dbReference type="ChEBI" id="CHEBI:37565"/>
    </ligand>
</feature>
<organism>
    <name type="scientific">Escherichia coli (strain SMS-3-5 / SECEC)</name>
    <dbReference type="NCBI Taxonomy" id="439855"/>
    <lineage>
        <taxon>Bacteria</taxon>
        <taxon>Pseudomonadati</taxon>
        <taxon>Pseudomonadota</taxon>
        <taxon>Gammaproteobacteria</taxon>
        <taxon>Enterobacterales</taxon>
        <taxon>Enterobacteriaceae</taxon>
        <taxon>Escherichia</taxon>
    </lineage>
</organism>
<proteinExistence type="inferred from homology"/>
<protein>
    <recommendedName>
        <fullName evidence="1">GTP cyclohydrolase-2</fullName>
        <ecNumber evidence="1">3.5.4.25</ecNumber>
    </recommendedName>
    <alternativeName>
        <fullName evidence="1">GTP cyclohydrolase II</fullName>
    </alternativeName>
</protein>
<dbReference type="EC" id="3.5.4.25" evidence="1"/>
<dbReference type="EMBL" id="CP000970">
    <property type="protein sequence ID" value="ACB19286.1"/>
    <property type="molecule type" value="Genomic_DNA"/>
</dbReference>
<dbReference type="RefSeq" id="WP_001176295.1">
    <property type="nucleotide sequence ID" value="NC_010498.1"/>
</dbReference>
<dbReference type="SMR" id="B1LH12"/>
<dbReference type="GeneID" id="86946614"/>
<dbReference type="KEGG" id="ecm:EcSMS35_1852"/>
<dbReference type="HOGENOM" id="CLU_020273_2_1_6"/>
<dbReference type="UniPathway" id="UPA00275">
    <property type="reaction ID" value="UER00400"/>
</dbReference>
<dbReference type="Proteomes" id="UP000007011">
    <property type="component" value="Chromosome"/>
</dbReference>
<dbReference type="GO" id="GO:0005829">
    <property type="term" value="C:cytosol"/>
    <property type="evidence" value="ECO:0007669"/>
    <property type="project" value="TreeGrafter"/>
</dbReference>
<dbReference type="GO" id="GO:0005525">
    <property type="term" value="F:GTP binding"/>
    <property type="evidence" value="ECO:0007669"/>
    <property type="project" value="UniProtKB-KW"/>
</dbReference>
<dbReference type="GO" id="GO:0003935">
    <property type="term" value="F:GTP cyclohydrolase II activity"/>
    <property type="evidence" value="ECO:0007669"/>
    <property type="project" value="UniProtKB-UniRule"/>
</dbReference>
<dbReference type="GO" id="GO:0008270">
    <property type="term" value="F:zinc ion binding"/>
    <property type="evidence" value="ECO:0007669"/>
    <property type="project" value="UniProtKB-UniRule"/>
</dbReference>
<dbReference type="GO" id="GO:0009231">
    <property type="term" value="P:riboflavin biosynthetic process"/>
    <property type="evidence" value="ECO:0007669"/>
    <property type="project" value="UniProtKB-UniRule"/>
</dbReference>
<dbReference type="CDD" id="cd00641">
    <property type="entry name" value="GTP_cyclohydro2"/>
    <property type="match status" value="1"/>
</dbReference>
<dbReference type="FunFam" id="3.40.50.10990:FF:000002">
    <property type="entry name" value="GTP cyclohydrolase-2"/>
    <property type="match status" value="1"/>
</dbReference>
<dbReference type="Gene3D" id="3.40.50.10990">
    <property type="entry name" value="GTP cyclohydrolase II"/>
    <property type="match status" value="1"/>
</dbReference>
<dbReference type="HAMAP" id="MF_00179">
    <property type="entry name" value="RibA"/>
    <property type="match status" value="1"/>
</dbReference>
<dbReference type="InterPro" id="IPR032677">
    <property type="entry name" value="GTP_cyclohydro_II"/>
</dbReference>
<dbReference type="InterPro" id="IPR000926">
    <property type="entry name" value="RibA"/>
</dbReference>
<dbReference type="InterPro" id="IPR036144">
    <property type="entry name" value="RibA-like_sf"/>
</dbReference>
<dbReference type="NCBIfam" id="NF001591">
    <property type="entry name" value="PRK00393.1"/>
    <property type="match status" value="1"/>
</dbReference>
<dbReference type="NCBIfam" id="TIGR00505">
    <property type="entry name" value="ribA"/>
    <property type="match status" value="1"/>
</dbReference>
<dbReference type="PANTHER" id="PTHR21327:SF18">
    <property type="entry name" value="3,4-DIHYDROXY-2-BUTANONE 4-PHOSPHATE SYNTHASE"/>
    <property type="match status" value="1"/>
</dbReference>
<dbReference type="PANTHER" id="PTHR21327">
    <property type="entry name" value="GTP CYCLOHYDROLASE II-RELATED"/>
    <property type="match status" value="1"/>
</dbReference>
<dbReference type="Pfam" id="PF00925">
    <property type="entry name" value="GTP_cyclohydro2"/>
    <property type="match status" value="1"/>
</dbReference>
<dbReference type="SUPFAM" id="SSF142695">
    <property type="entry name" value="RibA-like"/>
    <property type="match status" value="1"/>
</dbReference>
<reference key="1">
    <citation type="journal article" date="2008" name="J. Bacteriol.">
        <title>Insights into the environmental resistance gene pool from the genome sequence of the multidrug-resistant environmental isolate Escherichia coli SMS-3-5.</title>
        <authorList>
            <person name="Fricke W.F."/>
            <person name="Wright M.S."/>
            <person name="Lindell A.H."/>
            <person name="Harkins D.M."/>
            <person name="Baker-Austin C."/>
            <person name="Ravel J."/>
            <person name="Stepanauskas R."/>
        </authorList>
    </citation>
    <scope>NUCLEOTIDE SEQUENCE [LARGE SCALE GENOMIC DNA]</scope>
    <source>
        <strain>SMS-3-5 / SECEC</strain>
    </source>
</reference>
<accession>B1LH12</accession>
<keyword id="KW-0342">GTP-binding</keyword>
<keyword id="KW-0378">Hydrolase</keyword>
<keyword id="KW-0479">Metal-binding</keyword>
<keyword id="KW-0547">Nucleotide-binding</keyword>
<keyword id="KW-0686">Riboflavin biosynthesis</keyword>
<keyword id="KW-0862">Zinc</keyword>
<sequence>MQLKRVAEAKLPTPWGDFLMVGFEELATGHDHVALVYGDISGHTPVLARVHSECLTGDALFSLRCDCGFQLEAALTQIAEEGRGILLYHRQEGRNIGLLNKIRAYALQDQGYDTVEANHQLGFAADERDFTLCADMFKLLGVNEVRLLTNNPKKVEILTEAGINIVERVPLIVGRNPNNEHYLDTKAEKMGHLLNK</sequence>